<protein>
    <recommendedName>
        <fullName evidence="1">Ribosomal RNA large subunit methyltransferase H</fullName>
        <ecNumber evidence="1">2.1.1.177</ecNumber>
    </recommendedName>
    <alternativeName>
        <fullName evidence="1">23S rRNA (pseudouridine1915-N3)-methyltransferase</fullName>
    </alternativeName>
    <alternativeName>
        <fullName evidence="1">23S rRNA m3Psi1915 methyltransferase</fullName>
    </alternativeName>
    <alternativeName>
        <fullName evidence="1">rRNA (pseudouridine-N3-)-methyltransferase RlmH</fullName>
    </alternativeName>
</protein>
<evidence type="ECO:0000255" key="1">
    <source>
        <dbReference type="HAMAP-Rule" id="MF_00658"/>
    </source>
</evidence>
<organism>
    <name type="scientific">Geobacter metallireducens (strain ATCC 53774 / DSM 7210 / GS-15)</name>
    <dbReference type="NCBI Taxonomy" id="269799"/>
    <lineage>
        <taxon>Bacteria</taxon>
        <taxon>Pseudomonadati</taxon>
        <taxon>Thermodesulfobacteriota</taxon>
        <taxon>Desulfuromonadia</taxon>
        <taxon>Geobacterales</taxon>
        <taxon>Geobacteraceae</taxon>
        <taxon>Geobacter</taxon>
    </lineage>
</organism>
<feature type="chain" id="PRO_0000260558" description="Ribosomal RNA large subunit methyltransferase H">
    <location>
        <begin position="1"/>
        <end position="154"/>
    </location>
</feature>
<feature type="binding site" evidence="1">
    <location>
        <position position="70"/>
    </location>
    <ligand>
        <name>S-adenosyl-L-methionine</name>
        <dbReference type="ChEBI" id="CHEBI:59789"/>
    </ligand>
</feature>
<feature type="binding site" evidence="1">
    <location>
        <position position="102"/>
    </location>
    <ligand>
        <name>S-adenosyl-L-methionine</name>
        <dbReference type="ChEBI" id="CHEBI:59789"/>
    </ligand>
</feature>
<feature type="binding site" evidence="1">
    <location>
        <begin position="121"/>
        <end position="126"/>
    </location>
    <ligand>
        <name>S-adenosyl-L-methionine</name>
        <dbReference type="ChEBI" id="CHEBI:59789"/>
    </ligand>
</feature>
<gene>
    <name evidence="1" type="primary">rlmH</name>
    <name type="ordered locus">Gmet_3202</name>
</gene>
<reference key="1">
    <citation type="journal article" date="2009" name="BMC Microbiol.">
        <title>The genome sequence of Geobacter metallireducens: features of metabolism, physiology and regulation common and dissimilar to Geobacter sulfurreducens.</title>
        <authorList>
            <person name="Aklujkar M."/>
            <person name="Krushkal J."/>
            <person name="DiBartolo G."/>
            <person name="Lapidus A."/>
            <person name="Land M.L."/>
            <person name="Lovley D.R."/>
        </authorList>
    </citation>
    <scope>NUCLEOTIDE SEQUENCE [LARGE SCALE GENOMIC DNA]</scope>
    <source>
        <strain>ATCC 53774 / DSM 7210 / GS-15</strain>
    </source>
</reference>
<proteinExistence type="inferred from homology"/>
<dbReference type="EC" id="2.1.1.177" evidence="1"/>
<dbReference type="EMBL" id="CP000148">
    <property type="protein sequence ID" value="ABB33415.1"/>
    <property type="molecule type" value="Genomic_DNA"/>
</dbReference>
<dbReference type="RefSeq" id="WP_004512640.1">
    <property type="nucleotide sequence ID" value="NC_007517.1"/>
</dbReference>
<dbReference type="SMR" id="Q39QQ9"/>
<dbReference type="STRING" id="269799.Gmet_3202"/>
<dbReference type="KEGG" id="gme:Gmet_3202"/>
<dbReference type="eggNOG" id="COG1576">
    <property type="taxonomic scope" value="Bacteria"/>
</dbReference>
<dbReference type="HOGENOM" id="CLU_100552_1_0_7"/>
<dbReference type="Proteomes" id="UP000007073">
    <property type="component" value="Chromosome"/>
</dbReference>
<dbReference type="GO" id="GO:0005737">
    <property type="term" value="C:cytoplasm"/>
    <property type="evidence" value="ECO:0007669"/>
    <property type="project" value="UniProtKB-SubCell"/>
</dbReference>
<dbReference type="GO" id="GO:0070038">
    <property type="term" value="F:rRNA (pseudouridine-N3-)-methyltransferase activity"/>
    <property type="evidence" value="ECO:0007669"/>
    <property type="project" value="UniProtKB-UniRule"/>
</dbReference>
<dbReference type="CDD" id="cd18081">
    <property type="entry name" value="RlmH-like"/>
    <property type="match status" value="1"/>
</dbReference>
<dbReference type="Gene3D" id="3.40.1280.10">
    <property type="match status" value="1"/>
</dbReference>
<dbReference type="HAMAP" id="MF_00658">
    <property type="entry name" value="23SrRNA_methyltr_H"/>
    <property type="match status" value="1"/>
</dbReference>
<dbReference type="InterPro" id="IPR029028">
    <property type="entry name" value="Alpha/beta_knot_MTases"/>
</dbReference>
<dbReference type="InterPro" id="IPR003742">
    <property type="entry name" value="RlmH-like"/>
</dbReference>
<dbReference type="InterPro" id="IPR029026">
    <property type="entry name" value="tRNA_m1G_MTases_N"/>
</dbReference>
<dbReference type="PANTHER" id="PTHR33603">
    <property type="entry name" value="METHYLTRANSFERASE"/>
    <property type="match status" value="1"/>
</dbReference>
<dbReference type="PANTHER" id="PTHR33603:SF1">
    <property type="entry name" value="RIBOSOMAL RNA LARGE SUBUNIT METHYLTRANSFERASE H"/>
    <property type="match status" value="1"/>
</dbReference>
<dbReference type="Pfam" id="PF02590">
    <property type="entry name" value="SPOUT_MTase"/>
    <property type="match status" value="1"/>
</dbReference>
<dbReference type="PIRSF" id="PIRSF004505">
    <property type="entry name" value="MT_bac"/>
    <property type="match status" value="1"/>
</dbReference>
<dbReference type="SUPFAM" id="SSF75217">
    <property type="entry name" value="alpha/beta knot"/>
    <property type="match status" value="1"/>
</dbReference>
<keyword id="KW-0963">Cytoplasm</keyword>
<keyword id="KW-0489">Methyltransferase</keyword>
<keyword id="KW-1185">Reference proteome</keyword>
<keyword id="KW-0698">rRNA processing</keyword>
<keyword id="KW-0949">S-adenosyl-L-methionine</keyword>
<keyword id="KW-0808">Transferase</keyword>
<accession>Q39QQ9</accession>
<comment type="function">
    <text evidence="1">Specifically methylates the pseudouridine at position 1915 (m3Psi1915) in 23S rRNA.</text>
</comment>
<comment type="catalytic activity">
    <reaction evidence="1">
        <text>pseudouridine(1915) in 23S rRNA + S-adenosyl-L-methionine = N(3)-methylpseudouridine(1915) in 23S rRNA + S-adenosyl-L-homocysteine + H(+)</text>
        <dbReference type="Rhea" id="RHEA:42752"/>
        <dbReference type="Rhea" id="RHEA-COMP:10221"/>
        <dbReference type="Rhea" id="RHEA-COMP:10222"/>
        <dbReference type="ChEBI" id="CHEBI:15378"/>
        <dbReference type="ChEBI" id="CHEBI:57856"/>
        <dbReference type="ChEBI" id="CHEBI:59789"/>
        <dbReference type="ChEBI" id="CHEBI:65314"/>
        <dbReference type="ChEBI" id="CHEBI:74486"/>
        <dbReference type="EC" id="2.1.1.177"/>
    </reaction>
</comment>
<comment type="subunit">
    <text evidence="1">Homodimer.</text>
</comment>
<comment type="subcellular location">
    <subcellularLocation>
        <location evidence="1">Cytoplasm</location>
    </subcellularLocation>
</comment>
<comment type="similarity">
    <text evidence="1">Belongs to the RNA methyltransferase RlmH family.</text>
</comment>
<sequence length="154" mass="17689">MKLKILWVGKTQEEWLRRGIDEYTGRIRRYTPLEIAEAREEKGAAAEAMRTRECERLEKLVPKNARLVLLDERGDQLTSPELAAFMGKCRDSAVPEMVFAIGGAYGFADSFRARADRVLALSRLTFTHQMVRVILLEQIYRAHTILNGEPYHHS</sequence>
<name>RLMH_GEOMG</name>